<proteinExistence type="evidence at protein level"/>
<gene>
    <name evidence="2" type="primary">NUP205</name>
    <name type="synonym">EMB3142</name>
    <name evidence="5" type="ordered locus">At5g51200</name>
    <name evidence="6" type="ORF">MWD22.15</name>
</gene>
<accession>F4KBW6</accession>
<accession>Q9LU53</accession>
<keyword id="KW-0509">mRNA transport</keyword>
<keyword id="KW-0906">Nuclear pore complex</keyword>
<keyword id="KW-0539">Nucleus</keyword>
<keyword id="KW-0653">Protein transport</keyword>
<keyword id="KW-1185">Reference proteome</keyword>
<keyword id="KW-0811">Translocation</keyword>
<keyword id="KW-0813">Transport</keyword>
<sequence>MVSPKDLVAIVHSSLLGTSRPTPTQRIELTHAIRNSFPSLQNLLSFPPPKPSDRAQVQSKEIRLPDSLPISLDDQDIAISLKLSDELHLNEIDSVRLLVSSNQEWGLMGRDPLEIQRLATGLWYTGRRDLTSTLYTLLRAVVLDEGLEPDLIADIQGLLEELIEAGLRQRLITLIKELNREDPTGLGGPLCERYLIDSRGALVERRAVVQRERLILGHCLVLSILVDRPGSKDVKDIYYILKDNAAQLTEGNDTISSQITFSLLFSLIITFVSDAISRLSDKSSMISQDASFRTDFQDIVMASGSDPTADGFIGGIRLAWAVHLMLIHDGISGMDTISTASTTDMGHICSCLESIFSKNVFQFLLDNVLRTAAYQNDEEDIIYIYNAYLHKLASCFLSHPIARDKVKESKDMAMSVLNSYRTSDPLDGSMQTEESDRPLPFISLMEFKEPELLSGNDVLWTFVNFAGEDHTNFKTLVAFLEMLCTLASTQEGASKVYELLRGTSFRSIGWPTLFDCIRIYDEKFKQSLQTAGAMMPEFLEGDAKALVAYLNVLQKVVENGNPTERKNWFPDIEPFFKLLGYENIPPYLKGALRKTIAAFVNVFPEMRDSIWAFLEQYDLPVVVGSQVGKSDQSSQVYDMQFELNEVEARREQYPSTISFLNLINALIAGEKDVNDRGRRAYSDPCEKWQLVVACLQHFHMILSMYDIQEEDLDGFTEHPHFLVSLETSSLQTQLPIIELLKDFMSGKALYRNLMGILQVGVNSIISERLSKTYGKILEKAVQLSLEILLLVFEKDLLVSDVWRPLYQPLDIILSQDHNQIIALLEYVRYDSLPQIQRSSIKIMNILRCSRLVGLVPMLIKIDAANSLIEDYAACLEGRLEEGEVVENSCDDLGVLIMQLLVDNINRPAPSITHLLLKFDLDAPVEGTVLQPKFHYSCLKVILEMLEKLPNPDINFLLFEFGFQLLCELNLDPLTSGPTMDLLSSKKYQFFLQHLDTIGVATLPKRSGSQALRISSLHQRAWLLKLLAIALHTGSGSSSAHLEACQSILSHLFGREVTEAANEPFSSSTYPQDGLDYAGTSSISKSKALALLEILQFRSPDASMQLPQIVSSLKYDSLVEDILGNRDTSVSGSIYYYSERGDRLIDLSSFSNKLWQKLHSGFPLVDSFPNVAELSEVRETIQQLLKWGWKYNRNLEEQAAQLHMLAGWSQIVEVSACRRISSLDNRSEILYRILDASLSASASPDCSLKMAFVLTQVALTCIAKLRDDRFSFQGALSSDTVTCLDVMMVKHLSTGACHSVLFKLVMAILRHESSESLRRRQYALLLSYFQYCQHMIALDVPTSVVQFLLLNEQDGEDLDIQKIDKEQADLARANFFIIKKEAQGILDLVIKDASQGSEFGKTISLYVLEALVCIDHERYFLSQLQSRGFIRSCLGSISNISYQDGTHLLESQQRACTLEAELALLLRISHKYGKSGGQVLFSMGALEHIASCRAISFKGNMRRVDMKLQSDVGYNVQKQRTIITAVLRLVFALTSLVETSEFFEGRNKIVRDVVEFIKGHQSLFDQLLREDFTQADDLLMEQIILAVGILSKVWPFEENDGYGFVQGLFDMMSKLFIASPIKSILSQGSELKLSQLRFSLTSYLYFLVTKNSLRLQVSDDSLDSSTKLRQPTLLLLASLLSHVTDSLERAAEKKSLLLHKIRDINELSRQDVDAIIKICDSQEYVTPSDNIHKRRYIAMVEMCQIVGNRDQLITLLLQLAEHVLNIILIHLQDRSVSSNERGSYGSKSHIQQEVTDLCGKLSPTIDRLALLNEGKVGHNLKVFQRLATTVKEMAIQKCV</sequence>
<feature type="chain" id="PRO_0000431078" description="Nuclear pore complex protein NUP205">
    <location>
        <begin position="1"/>
        <end position="1838"/>
    </location>
</feature>
<dbReference type="EMBL" id="AB023044">
    <property type="protein sequence ID" value="BAA97383.1"/>
    <property type="status" value="ALT_SEQ"/>
    <property type="molecule type" value="Genomic_DNA"/>
</dbReference>
<dbReference type="EMBL" id="CP002688">
    <property type="status" value="NOT_ANNOTATED_CDS"/>
    <property type="molecule type" value="Genomic_DNA"/>
</dbReference>
<dbReference type="SMR" id="F4KBW6"/>
<dbReference type="BioGRID" id="20440">
    <property type="interactions" value="5"/>
</dbReference>
<dbReference type="FunCoup" id="F4KBW6">
    <property type="interactions" value="3090"/>
</dbReference>
<dbReference type="STRING" id="3702.F4KBW6"/>
<dbReference type="GlyGen" id="F4KBW6">
    <property type="glycosylation" value="1 site"/>
</dbReference>
<dbReference type="PaxDb" id="3702-AT5G51200.1"/>
<dbReference type="Araport" id="AT5G51200"/>
<dbReference type="TAIR" id="AT5G51200">
    <property type="gene designation" value="EMB3142"/>
</dbReference>
<dbReference type="eggNOG" id="KOG1835">
    <property type="taxonomic scope" value="Eukaryota"/>
</dbReference>
<dbReference type="HOGENOM" id="CLU_002139_0_0_1"/>
<dbReference type="InParanoid" id="F4KBW6"/>
<dbReference type="CD-CODE" id="4299E36E">
    <property type="entry name" value="Nucleolus"/>
</dbReference>
<dbReference type="PRO" id="PR:F4KBW6"/>
<dbReference type="Proteomes" id="UP000006548">
    <property type="component" value="Chromosome 5"/>
</dbReference>
<dbReference type="ExpressionAtlas" id="F4KBW6">
    <property type="expression patterns" value="baseline and differential"/>
</dbReference>
<dbReference type="GO" id="GO:0005635">
    <property type="term" value="C:nuclear envelope"/>
    <property type="evidence" value="ECO:0000314"/>
    <property type="project" value="TAIR"/>
</dbReference>
<dbReference type="GO" id="GO:0005643">
    <property type="term" value="C:nuclear pore"/>
    <property type="evidence" value="ECO:0007669"/>
    <property type="project" value="UniProtKB-SubCell"/>
</dbReference>
<dbReference type="GO" id="GO:0032922">
    <property type="term" value="P:circadian regulation of gene expression"/>
    <property type="evidence" value="ECO:0000315"/>
    <property type="project" value="TAIR"/>
</dbReference>
<dbReference type="GO" id="GO:0009682">
    <property type="term" value="P:induced systemic resistance"/>
    <property type="evidence" value="ECO:0000315"/>
    <property type="project" value="TAIR"/>
</dbReference>
<dbReference type="GO" id="GO:0051028">
    <property type="term" value="P:mRNA transport"/>
    <property type="evidence" value="ECO:0007669"/>
    <property type="project" value="UniProtKB-KW"/>
</dbReference>
<dbReference type="GO" id="GO:0015031">
    <property type="term" value="P:protein transport"/>
    <property type="evidence" value="ECO:0007669"/>
    <property type="project" value="UniProtKB-KW"/>
</dbReference>
<dbReference type="GO" id="GO:0009617">
    <property type="term" value="P:response to bacterium"/>
    <property type="evidence" value="ECO:0000315"/>
    <property type="project" value="TAIR"/>
</dbReference>
<dbReference type="GO" id="GO:0009862">
    <property type="term" value="P:systemic acquired resistance, salicylic acid mediated signaling pathway"/>
    <property type="evidence" value="ECO:0000315"/>
    <property type="project" value="TAIR"/>
</dbReference>
<dbReference type="InterPro" id="IPR021827">
    <property type="entry name" value="Nup186/Nup192/Nup205"/>
</dbReference>
<dbReference type="PANTHER" id="PTHR31344">
    <property type="entry name" value="NUCLEAR PORE COMPLEX PROTEIN NUP205"/>
    <property type="match status" value="1"/>
</dbReference>
<dbReference type="PANTHER" id="PTHR31344:SF0">
    <property type="entry name" value="NUCLEAR PORE COMPLEX PROTEIN NUP205"/>
    <property type="match status" value="1"/>
</dbReference>
<dbReference type="Pfam" id="PF11894">
    <property type="entry name" value="Nup192"/>
    <property type="match status" value="3"/>
</dbReference>
<protein>
    <recommendedName>
        <fullName evidence="2">Nuclear pore complex protein NUP205</fullName>
    </recommendedName>
    <alternativeName>
        <fullName evidence="2">Nucleoporin 205</fullName>
    </alternativeName>
    <alternativeName>
        <fullName>Protein EMBRYO DEFECTIVE 3142</fullName>
    </alternativeName>
</protein>
<organism evidence="7">
    <name type="scientific">Arabidopsis thaliana</name>
    <name type="common">Mouse-ear cress</name>
    <dbReference type="NCBI Taxonomy" id="3702"/>
    <lineage>
        <taxon>Eukaryota</taxon>
        <taxon>Viridiplantae</taxon>
        <taxon>Streptophyta</taxon>
        <taxon>Embryophyta</taxon>
        <taxon>Tracheophyta</taxon>
        <taxon>Spermatophyta</taxon>
        <taxon>Magnoliopsida</taxon>
        <taxon>eudicotyledons</taxon>
        <taxon>Gunneridae</taxon>
        <taxon>Pentapetalae</taxon>
        <taxon>rosids</taxon>
        <taxon>malvids</taxon>
        <taxon>Brassicales</taxon>
        <taxon>Brassicaceae</taxon>
        <taxon>Camelineae</taxon>
        <taxon>Arabidopsis</taxon>
    </lineage>
</organism>
<reference key="1">
    <citation type="journal article" date="2000" name="DNA Res.">
        <title>Structural analysis of Arabidopsis thaliana chromosome 5. X. Sequence features of the regions of 3,076,755 bp covered by sixty P1 and TAC clones.</title>
        <authorList>
            <person name="Sato S."/>
            <person name="Nakamura Y."/>
            <person name="Kaneko T."/>
            <person name="Katoh T."/>
            <person name="Asamizu E."/>
            <person name="Kotani H."/>
            <person name="Tabata S."/>
        </authorList>
    </citation>
    <scope>NUCLEOTIDE SEQUENCE [LARGE SCALE GENOMIC DNA]</scope>
    <source>
        <strain>cv. Columbia</strain>
    </source>
</reference>
<reference key="2">
    <citation type="journal article" date="2017" name="Plant J.">
        <title>Araport11: a complete reannotation of the Arabidopsis thaliana reference genome.</title>
        <authorList>
            <person name="Cheng C.Y."/>
            <person name="Krishnakumar V."/>
            <person name="Chan A.P."/>
            <person name="Thibaud-Nissen F."/>
            <person name="Schobel S."/>
            <person name="Town C.D."/>
        </authorList>
    </citation>
    <scope>GENOME REANNOTATION</scope>
    <source>
        <strain>cv. Columbia</strain>
    </source>
</reference>
<reference key="3">
    <citation type="journal article" date="2010" name="Plant Cell">
        <title>Identification and characterization of nuclear pore complex components in Arabidopsis thaliana.</title>
        <authorList>
            <person name="Tamura K."/>
            <person name="Fukao Y."/>
            <person name="Iwamoto M."/>
            <person name="Haraguchi T."/>
            <person name="Hara-Nishimura I."/>
        </authorList>
    </citation>
    <scope>IDENTIFICATION IN THE NUCLEAR PORE COMPLEX BY MASS SPECTROMETRY</scope>
    <scope>SUBCELLULAR LOCATION</scope>
    <scope>NOMENCLATURE</scope>
</reference>
<comment type="subunit">
    <text evidence="4">Part of the nuclear pore complex (NPC). The NPC has an eight-fold symmetrical structure comprising a central transport channel and two rings, the cytoplasmic and nuclear rings, to which eight filaments are attached. The cytoplasmic filaments have loose ends, while the nuclear filaments are joined in a distal ring, forming a nuclear basket. NPCs are highly dynamic in configuration and composition, and can be devided in 3 subcomplexes, the NUP62 subcomplex, the NUP107-160 subcomplex and the NUP93 subcomplex, containing approximately 30 different nucleoporin proteins.</text>
</comment>
<comment type="subcellular location">
    <subcellularLocation>
        <location evidence="1">Nucleus envelope</location>
    </subcellularLocation>
    <subcellularLocation>
        <location evidence="4">Nucleus</location>
        <location evidence="4">Nuclear pore complex</location>
    </subcellularLocation>
</comment>
<comment type="similarity">
    <text evidence="3">Belongs to the NUP186/NUP192/NUP205 family.</text>
</comment>
<comment type="sequence caution" evidence="3">
    <conflict type="erroneous gene model prediction">
        <sequence resource="EMBL-CDS" id="BAA97383"/>
    </conflict>
</comment>
<evidence type="ECO:0000269" key="1">
    <source>
    </source>
</evidence>
<evidence type="ECO:0000303" key="2">
    <source>
    </source>
</evidence>
<evidence type="ECO:0000305" key="3"/>
<evidence type="ECO:0000305" key="4">
    <source>
    </source>
</evidence>
<evidence type="ECO:0000312" key="5">
    <source>
        <dbReference type="Araport" id="AT5G51200"/>
    </source>
</evidence>
<evidence type="ECO:0000312" key="6">
    <source>
        <dbReference type="EMBL" id="BAA97383.1"/>
    </source>
</evidence>
<evidence type="ECO:0000312" key="7">
    <source>
        <dbReference type="Proteomes" id="UP000006548"/>
    </source>
</evidence>
<name>NU205_ARATH</name>